<organism>
    <name type="scientific">Candida glabrata (strain ATCC 2001 / BCRC 20586 / JCM 3761 / NBRC 0622 / NRRL Y-65 / CBS 138)</name>
    <name type="common">Yeast</name>
    <name type="synonym">Nakaseomyces glabratus</name>
    <dbReference type="NCBI Taxonomy" id="284593"/>
    <lineage>
        <taxon>Eukaryota</taxon>
        <taxon>Fungi</taxon>
        <taxon>Dikarya</taxon>
        <taxon>Ascomycota</taxon>
        <taxon>Saccharomycotina</taxon>
        <taxon>Saccharomycetes</taxon>
        <taxon>Saccharomycetales</taxon>
        <taxon>Saccharomycetaceae</taxon>
        <taxon>Nakaseomyces</taxon>
    </lineage>
</organism>
<name>EXO5_CANGA</name>
<feature type="transit peptide" description="Mitochondrion" evidence="2">
    <location>
        <begin position="1"/>
        <end status="unknown"/>
    </location>
</feature>
<feature type="chain" id="PRO_0000285322" description="Exonuclease V, mitochondrial">
    <location>
        <begin status="unknown"/>
        <end position="503"/>
    </location>
</feature>
<feature type="binding site" evidence="1">
    <location>
        <position position="92"/>
    </location>
    <ligand>
        <name>[4Fe-4S] cluster</name>
        <dbReference type="ChEBI" id="CHEBI:49883"/>
    </ligand>
</feature>
<feature type="binding site" evidence="1">
    <location>
        <position position="467"/>
    </location>
    <ligand>
        <name>[4Fe-4S] cluster</name>
        <dbReference type="ChEBI" id="CHEBI:49883"/>
    </ligand>
</feature>
<feature type="binding site" evidence="1">
    <location>
        <position position="470"/>
    </location>
    <ligand>
        <name>[4Fe-4S] cluster</name>
        <dbReference type="ChEBI" id="CHEBI:49883"/>
    </ligand>
</feature>
<feature type="binding site" evidence="1">
    <location>
        <position position="476"/>
    </location>
    <ligand>
        <name>[4Fe-4S] cluster</name>
        <dbReference type="ChEBI" id="CHEBI:49883"/>
    </ligand>
</feature>
<dbReference type="EC" id="3.1.-.-"/>
<dbReference type="EMBL" id="CR380959">
    <property type="protein sequence ID" value="CAG62564.1"/>
    <property type="molecule type" value="Genomic_DNA"/>
</dbReference>
<dbReference type="RefSeq" id="XP_449588.1">
    <property type="nucleotide sequence ID" value="XM_449588.1"/>
</dbReference>
<dbReference type="FunCoup" id="Q6FJK6">
    <property type="interactions" value="28"/>
</dbReference>
<dbReference type="EnsemblFungi" id="CAGL0M05577g-T">
    <property type="protein sequence ID" value="CAGL0M05577g-T-p1"/>
    <property type="gene ID" value="CAGL0M05577g"/>
</dbReference>
<dbReference type="KEGG" id="cgr:2891636"/>
<dbReference type="CGD" id="CAL0137347">
    <property type="gene designation" value="CAGL0M05577g"/>
</dbReference>
<dbReference type="VEuPathDB" id="FungiDB:CAGL0M05577g"/>
<dbReference type="eggNOG" id="ENOG502QR0P">
    <property type="taxonomic scope" value="Eukaryota"/>
</dbReference>
<dbReference type="HOGENOM" id="CLU_019985_0_0_1"/>
<dbReference type="InParanoid" id="Q6FJK6"/>
<dbReference type="OMA" id="LQVMYYR"/>
<dbReference type="Proteomes" id="UP000002428">
    <property type="component" value="Chromosome M"/>
</dbReference>
<dbReference type="GO" id="GO:0005739">
    <property type="term" value="C:mitochondrion"/>
    <property type="evidence" value="ECO:0007669"/>
    <property type="project" value="UniProtKB-SubCell"/>
</dbReference>
<dbReference type="GO" id="GO:0005634">
    <property type="term" value="C:nucleus"/>
    <property type="evidence" value="ECO:0007669"/>
    <property type="project" value="TreeGrafter"/>
</dbReference>
<dbReference type="GO" id="GO:0051539">
    <property type="term" value="F:4 iron, 4 sulfur cluster binding"/>
    <property type="evidence" value="ECO:0007669"/>
    <property type="project" value="UniProtKB-KW"/>
</dbReference>
<dbReference type="GO" id="GO:0003677">
    <property type="term" value="F:DNA binding"/>
    <property type="evidence" value="ECO:0007669"/>
    <property type="project" value="UniProtKB-KW"/>
</dbReference>
<dbReference type="GO" id="GO:0046872">
    <property type="term" value="F:metal ion binding"/>
    <property type="evidence" value="ECO:0007669"/>
    <property type="project" value="UniProtKB-KW"/>
</dbReference>
<dbReference type="GO" id="GO:0045145">
    <property type="term" value="F:single-stranded DNA 5'-3' DNA exonuclease activity"/>
    <property type="evidence" value="ECO:0007669"/>
    <property type="project" value="EnsemblFungi"/>
</dbReference>
<dbReference type="GO" id="GO:0036297">
    <property type="term" value="P:interstrand cross-link repair"/>
    <property type="evidence" value="ECO:0007669"/>
    <property type="project" value="TreeGrafter"/>
</dbReference>
<dbReference type="GO" id="GO:0000002">
    <property type="term" value="P:mitochondrial genome maintenance"/>
    <property type="evidence" value="ECO:0007669"/>
    <property type="project" value="EnsemblFungi"/>
</dbReference>
<dbReference type="InterPro" id="IPR016610">
    <property type="entry name" value="Exo5"/>
</dbReference>
<dbReference type="InterPro" id="IPR019190">
    <property type="entry name" value="EXOV"/>
</dbReference>
<dbReference type="PANTHER" id="PTHR14464">
    <property type="entry name" value="EXONUCLEASE V"/>
    <property type="match status" value="1"/>
</dbReference>
<dbReference type="PANTHER" id="PTHR14464:SF4">
    <property type="entry name" value="EXONUCLEASE V"/>
    <property type="match status" value="1"/>
</dbReference>
<dbReference type="Pfam" id="PF09810">
    <property type="entry name" value="Exo5"/>
    <property type="match status" value="1"/>
</dbReference>
<dbReference type="PIRSF" id="PIRSF013220">
    <property type="entry name" value="UCP013220"/>
    <property type="match status" value="1"/>
</dbReference>
<accession>Q6FJK6</accession>
<evidence type="ECO:0000250" key="1"/>
<evidence type="ECO:0000255" key="2"/>
<evidence type="ECO:0000305" key="3"/>
<gene>
    <name type="primary">EXO5</name>
    <name type="synonym">DEM1</name>
    <name type="ordered locus">CAGL0M05577g</name>
</gene>
<protein>
    <recommendedName>
        <fullName>Exonuclease V, mitochondrial</fullName>
        <shortName>Exo V</shortName>
        <ecNumber>3.1.-.-</ecNumber>
    </recommendedName>
    <alternativeName>
        <fullName>Defects in morphology protein 1</fullName>
    </alternativeName>
</protein>
<sequence>MTLRDVEKLRLWRLKIFRNQQPILRAKPPHASRKTQYLFQKIDNVKSQFGTDGKGDLLWQRDGMNPYHDLYDPGDLKTHRLSVTKLLTKSWCELRFAYDLYSRLPLFREAHLAAGERTHQKLENSEHTPVIRPQDIPQFSETVEIVEDDLHVLAASWAETITRLIHLFSSGDAREILCHGYLNKETNQLYDPMETEVWDPSQHILISGIIDHLTLTSKNGNLPLNNHHRSIDDSIAKLKNTRNEFAKNGLTIQISDVKTRTRKFIPPQESVQNATKLQLMYYRHFLLSLGTDSDNTYEMLLYNARIRGVDVDQPLNPANCLLIMIQMDGFVGDFVKLQNGDGFQFPKFDNAPISHSFTLADAKHHQFLQNINSHELAGQLLNGTFAKPITLRYFAMRLAQMYSMLTPLISEKLKVEYYHNNECFQEVEFVNDKKSLGESCRSASSFWFGKRAIEPVEATTFNYNQYCKHCDYRDHCAWIKDSLAKSTKLGDELTQIARRIHNI</sequence>
<comment type="function">
    <text evidence="1">Single strand DNA specific 5' exonuclease involved in mitochondrial DNA replication and recombination. Releases dinucleotides as main products of catalysis. Has the capacity to slide across 5'double-stranded DNA or 5'RNA sequences and resumes cutting two nucleotides downstream of the double-stranded-to-single-stranded junction or RNA-to-DNA junction, respectively (By similarity).</text>
</comment>
<comment type="cofactor">
    <cofactor evidence="1">
        <name>Mg(2+)</name>
        <dbReference type="ChEBI" id="CHEBI:18420"/>
    </cofactor>
</comment>
<comment type="cofactor">
    <cofactor evidence="1">
        <name>[4Fe-4S] cluster</name>
        <dbReference type="ChEBI" id="CHEBI:49883"/>
    </cofactor>
    <text evidence="1">Binds 1 [4Fe-4S] cluster.</text>
</comment>
<comment type="subunit">
    <text evidence="1">Monomer.</text>
</comment>
<comment type="subcellular location">
    <subcellularLocation>
        <location>Mitochondrion</location>
    </subcellularLocation>
</comment>
<comment type="similarity">
    <text evidence="3">Belongs to the EXO5 family.</text>
</comment>
<reference key="1">
    <citation type="journal article" date="2004" name="Nature">
        <title>Genome evolution in yeasts.</title>
        <authorList>
            <person name="Dujon B."/>
            <person name="Sherman D."/>
            <person name="Fischer G."/>
            <person name="Durrens P."/>
            <person name="Casaregola S."/>
            <person name="Lafontaine I."/>
            <person name="de Montigny J."/>
            <person name="Marck C."/>
            <person name="Neuveglise C."/>
            <person name="Talla E."/>
            <person name="Goffard N."/>
            <person name="Frangeul L."/>
            <person name="Aigle M."/>
            <person name="Anthouard V."/>
            <person name="Babour A."/>
            <person name="Barbe V."/>
            <person name="Barnay S."/>
            <person name="Blanchin S."/>
            <person name="Beckerich J.-M."/>
            <person name="Beyne E."/>
            <person name="Bleykasten C."/>
            <person name="Boisrame A."/>
            <person name="Boyer J."/>
            <person name="Cattolico L."/>
            <person name="Confanioleri F."/>
            <person name="de Daruvar A."/>
            <person name="Despons L."/>
            <person name="Fabre E."/>
            <person name="Fairhead C."/>
            <person name="Ferry-Dumazet H."/>
            <person name="Groppi A."/>
            <person name="Hantraye F."/>
            <person name="Hennequin C."/>
            <person name="Jauniaux N."/>
            <person name="Joyet P."/>
            <person name="Kachouri R."/>
            <person name="Kerrest A."/>
            <person name="Koszul R."/>
            <person name="Lemaire M."/>
            <person name="Lesur I."/>
            <person name="Ma L."/>
            <person name="Muller H."/>
            <person name="Nicaud J.-M."/>
            <person name="Nikolski M."/>
            <person name="Oztas S."/>
            <person name="Ozier-Kalogeropoulos O."/>
            <person name="Pellenz S."/>
            <person name="Potier S."/>
            <person name="Richard G.-F."/>
            <person name="Straub M.-L."/>
            <person name="Suleau A."/>
            <person name="Swennen D."/>
            <person name="Tekaia F."/>
            <person name="Wesolowski-Louvel M."/>
            <person name="Westhof E."/>
            <person name="Wirth B."/>
            <person name="Zeniou-Meyer M."/>
            <person name="Zivanovic Y."/>
            <person name="Bolotin-Fukuhara M."/>
            <person name="Thierry A."/>
            <person name="Bouchier C."/>
            <person name="Caudron B."/>
            <person name="Scarpelli C."/>
            <person name="Gaillardin C."/>
            <person name="Weissenbach J."/>
            <person name="Wincker P."/>
            <person name="Souciet J.-L."/>
        </authorList>
    </citation>
    <scope>NUCLEOTIDE SEQUENCE [LARGE SCALE GENOMIC DNA]</scope>
    <source>
        <strain>ATCC 2001 / BCRC 20586 / JCM 3761 / NBRC 0622 / NRRL Y-65 / CBS 138</strain>
    </source>
</reference>
<proteinExistence type="inferred from homology"/>
<keyword id="KW-0004">4Fe-4S</keyword>
<keyword id="KW-0238">DNA-binding</keyword>
<keyword id="KW-0269">Exonuclease</keyword>
<keyword id="KW-0378">Hydrolase</keyword>
<keyword id="KW-0408">Iron</keyword>
<keyword id="KW-0411">Iron-sulfur</keyword>
<keyword id="KW-0460">Magnesium</keyword>
<keyword id="KW-0479">Metal-binding</keyword>
<keyword id="KW-0496">Mitochondrion</keyword>
<keyword id="KW-0540">Nuclease</keyword>
<keyword id="KW-1185">Reference proteome</keyword>
<keyword id="KW-0809">Transit peptide</keyword>